<keyword id="KW-0028">Amino-acid biosynthesis</keyword>
<keyword id="KW-0368">Histidine biosynthesis</keyword>
<keyword id="KW-0378">Hydrolase</keyword>
<keyword id="KW-0486">Methionine biosynthesis</keyword>
<keyword id="KW-0511">Multifunctional enzyme</keyword>
<keyword id="KW-0521">NADP</keyword>
<keyword id="KW-0554">One-carbon metabolism</keyword>
<keyword id="KW-0560">Oxidoreductase</keyword>
<keyword id="KW-0658">Purine biosynthesis</keyword>
<keyword id="KW-1185">Reference proteome</keyword>
<gene>
    <name evidence="1" type="primary">folD</name>
    <name type="ordered locus">BLi02602</name>
    <name type="ordered locus">BL01527</name>
</gene>
<proteinExistence type="inferred from homology"/>
<organism>
    <name type="scientific">Bacillus licheniformis (strain ATCC 14580 / DSM 13 / JCM 2505 / CCUG 7422 / NBRC 12200 / NCIMB 9375 / NCTC 10341 / NRRL NRS-1264 / Gibson 46)</name>
    <dbReference type="NCBI Taxonomy" id="279010"/>
    <lineage>
        <taxon>Bacteria</taxon>
        <taxon>Bacillati</taxon>
        <taxon>Bacillota</taxon>
        <taxon>Bacilli</taxon>
        <taxon>Bacillales</taxon>
        <taxon>Bacillaceae</taxon>
        <taxon>Bacillus</taxon>
    </lineage>
</organism>
<feature type="chain" id="PRO_0000268271" description="Bifunctional protein FolD">
    <location>
        <begin position="1"/>
        <end position="284"/>
    </location>
</feature>
<feature type="binding site" evidence="1">
    <location>
        <begin position="165"/>
        <end position="167"/>
    </location>
    <ligand>
        <name>NADP(+)</name>
        <dbReference type="ChEBI" id="CHEBI:58349"/>
    </ligand>
</feature>
<feature type="binding site" evidence="1">
    <location>
        <position position="190"/>
    </location>
    <ligand>
        <name>NADP(+)</name>
        <dbReference type="ChEBI" id="CHEBI:58349"/>
    </ligand>
</feature>
<feature type="binding site" evidence="1">
    <location>
        <position position="231"/>
    </location>
    <ligand>
        <name>NADP(+)</name>
        <dbReference type="ChEBI" id="CHEBI:58349"/>
    </ligand>
</feature>
<name>FOLD_BACLD</name>
<reference key="1">
    <citation type="journal article" date="2004" name="J. Mol. Microbiol. Biotechnol.">
        <title>The complete genome sequence of Bacillus licheniformis DSM13, an organism with great industrial potential.</title>
        <authorList>
            <person name="Veith B."/>
            <person name="Herzberg C."/>
            <person name="Steckel S."/>
            <person name="Feesche J."/>
            <person name="Maurer K.H."/>
            <person name="Ehrenreich P."/>
            <person name="Baeumer S."/>
            <person name="Henne A."/>
            <person name="Liesegang H."/>
            <person name="Merkl R."/>
            <person name="Ehrenreich A."/>
            <person name="Gottschalk G."/>
        </authorList>
    </citation>
    <scope>NUCLEOTIDE SEQUENCE [LARGE SCALE GENOMIC DNA]</scope>
    <source>
        <strain>ATCC 14580 / DSM 13 / JCM 2505 / CCUG 7422 / NBRC 12200 / NCIMB 9375 / NCTC 10341 / NRRL NRS-1264 / Gibson 46</strain>
    </source>
</reference>
<reference key="2">
    <citation type="journal article" date="2004" name="Genome Biol.">
        <title>Complete genome sequence of the industrial bacterium Bacillus licheniformis and comparisons with closely related Bacillus species.</title>
        <authorList>
            <person name="Rey M.W."/>
            <person name="Ramaiya P."/>
            <person name="Nelson B.A."/>
            <person name="Brody-Karpin S.D."/>
            <person name="Zaretsky E.J."/>
            <person name="Tang M."/>
            <person name="Lopez de Leon A."/>
            <person name="Xiang H."/>
            <person name="Gusti V."/>
            <person name="Clausen I.G."/>
            <person name="Olsen P.B."/>
            <person name="Rasmussen M.D."/>
            <person name="Andersen J.T."/>
            <person name="Joergensen P.L."/>
            <person name="Larsen T.S."/>
            <person name="Sorokin A."/>
            <person name="Bolotin A."/>
            <person name="Lapidus A."/>
            <person name="Galleron N."/>
            <person name="Ehrlich S.D."/>
            <person name="Berka R.M."/>
        </authorList>
    </citation>
    <scope>NUCLEOTIDE SEQUENCE [LARGE SCALE GENOMIC DNA]</scope>
    <source>
        <strain>ATCC 14580 / DSM 13 / JCM 2505 / CCUG 7422 / NBRC 12200 / NCIMB 9375 / NCTC 10341 / NRRL NRS-1264 / Gibson 46</strain>
    </source>
</reference>
<protein>
    <recommendedName>
        <fullName evidence="1">Bifunctional protein FolD</fullName>
    </recommendedName>
    <domain>
        <recommendedName>
            <fullName evidence="1">Methylenetetrahydrofolate dehydrogenase</fullName>
            <ecNumber evidence="1">1.5.1.5</ecNumber>
        </recommendedName>
    </domain>
    <domain>
        <recommendedName>
            <fullName evidence="1">Methenyltetrahydrofolate cyclohydrolase</fullName>
            <ecNumber evidence="1">3.5.4.9</ecNumber>
        </recommendedName>
    </domain>
</protein>
<sequence>MTATIIDGKETAKEKRGQLAKEVEELKKQGVTPGLAVILIGDDPASLSYVRGKKKAAEAMGIRFQLDHFDASFTEQELLEVIDQYNQNDDFHGILVQLPLPDHISEQAVIERISPEKDVDGFHPLNVGKMLLGEDTFLPCTPAGIVELLKKTEIDLSGKEVVVVGRSNIVGKPVGQLLLNENATVTYCHSRTADITAHTKKADILIVAVGKANFIKADQIKEGAVVIDVGVNRLDNGKLAGDVDFEEAKEKASYITPVPGGVGPMTITMLAHNTVKSAKRTIQL</sequence>
<comment type="function">
    <text evidence="1">Catalyzes the oxidation of 5,10-methylenetetrahydrofolate to 5,10-methenyltetrahydrofolate and then the hydrolysis of 5,10-methenyltetrahydrofolate to 10-formyltetrahydrofolate.</text>
</comment>
<comment type="catalytic activity">
    <reaction evidence="1">
        <text>(6R)-5,10-methylene-5,6,7,8-tetrahydrofolate + NADP(+) = (6R)-5,10-methenyltetrahydrofolate + NADPH</text>
        <dbReference type="Rhea" id="RHEA:22812"/>
        <dbReference type="ChEBI" id="CHEBI:15636"/>
        <dbReference type="ChEBI" id="CHEBI:57455"/>
        <dbReference type="ChEBI" id="CHEBI:57783"/>
        <dbReference type="ChEBI" id="CHEBI:58349"/>
        <dbReference type="EC" id="1.5.1.5"/>
    </reaction>
</comment>
<comment type="catalytic activity">
    <reaction evidence="1">
        <text>(6R)-5,10-methenyltetrahydrofolate + H2O = (6R)-10-formyltetrahydrofolate + H(+)</text>
        <dbReference type="Rhea" id="RHEA:23700"/>
        <dbReference type="ChEBI" id="CHEBI:15377"/>
        <dbReference type="ChEBI" id="CHEBI:15378"/>
        <dbReference type="ChEBI" id="CHEBI:57455"/>
        <dbReference type="ChEBI" id="CHEBI:195366"/>
        <dbReference type="EC" id="3.5.4.9"/>
    </reaction>
</comment>
<comment type="pathway">
    <text evidence="1">One-carbon metabolism; tetrahydrofolate interconversion.</text>
</comment>
<comment type="subunit">
    <text evidence="1">Homodimer.</text>
</comment>
<comment type="similarity">
    <text evidence="1">Belongs to the tetrahydrofolate dehydrogenase/cyclohydrolase family.</text>
</comment>
<dbReference type="EC" id="1.5.1.5" evidence="1"/>
<dbReference type="EC" id="3.5.4.9" evidence="1"/>
<dbReference type="EMBL" id="AE017333">
    <property type="protein sequence ID" value="AAU41476.1"/>
    <property type="molecule type" value="Genomic_DNA"/>
</dbReference>
<dbReference type="EMBL" id="CP000002">
    <property type="protein sequence ID" value="AAU24117.1"/>
    <property type="molecule type" value="Genomic_DNA"/>
</dbReference>
<dbReference type="RefSeq" id="WP_003183381.1">
    <property type="nucleotide sequence ID" value="NC_006322.1"/>
</dbReference>
<dbReference type="SMR" id="Q65HI8"/>
<dbReference type="STRING" id="279010.BL01527"/>
<dbReference type="GeneID" id="92860803"/>
<dbReference type="KEGG" id="bld:BLi02602"/>
<dbReference type="KEGG" id="bli:BL01527"/>
<dbReference type="eggNOG" id="COG0190">
    <property type="taxonomic scope" value="Bacteria"/>
</dbReference>
<dbReference type="HOGENOM" id="CLU_034045_2_1_9"/>
<dbReference type="UniPathway" id="UPA00193"/>
<dbReference type="Proteomes" id="UP000000606">
    <property type="component" value="Chromosome"/>
</dbReference>
<dbReference type="GO" id="GO:0005829">
    <property type="term" value="C:cytosol"/>
    <property type="evidence" value="ECO:0007669"/>
    <property type="project" value="TreeGrafter"/>
</dbReference>
<dbReference type="GO" id="GO:0004477">
    <property type="term" value="F:methenyltetrahydrofolate cyclohydrolase activity"/>
    <property type="evidence" value="ECO:0007669"/>
    <property type="project" value="UniProtKB-UniRule"/>
</dbReference>
<dbReference type="GO" id="GO:0004488">
    <property type="term" value="F:methylenetetrahydrofolate dehydrogenase (NADP+) activity"/>
    <property type="evidence" value="ECO:0007669"/>
    <property type="project" value="UniProtKB-UniRule"/>
</dbReference>
<dbReference type="GO" id="GO:0000105">
    <property type="term" value="P:L-histidine biosynthetic process"/>
    <property type="evidence" value="ECO:0007669"/>
    <property type="project" value="UniProtKB-KW"/>
</dbReference>
<dbReference type="GO" id="GO:0009086">
    <property type="term" value="P:methionine biosynthetic process"/>
    <property type="evidence" value="ECO:0007669"/>
    <property type="project" value="UniProtKB-KW"/>
</dbReference>
<dbReference type="GO" id="GO:0006164">
    <property type="term" value="P:purine nucleotide biosynthetic process"/>
    <property type="evidence" value="ECO:0007669"/>
    <property type="project" value="UniProtKB-KW"/>
</dbReference>
<dbReference type="GO" id="GO:0035999">
    <property type="term" value="P:tetrahydrofolate interconversion"/>
    <property type="evidence" value="ECO:0007669"/>
    <property type="project" value="UniProtKB-UniRule"/>
</dbReference>
<dbReference type="CDD" id="cd01080">
    <property type="entry name" value="NAD_bind_m-THF_DH_Cyclohyd"/>
    <property type="match status" value="1"/>
</dbReference>
<dbReference type="FunFam" id="3.40.50.10860:FF:000001">
    <property type="entry name" value="Bifunctional protein FolD"/>
    <property type="match status" value="1"/>
</dbReference>
<dbReference type="FunFam" id="3.40.50.720:FF:000094">
    <property type="entry name" value="Bifunctional protein FolD"/>
    <property type="match status" value="1"/>
</dbReference>
<dbReference type="Gene3D" id="3.40.50.10860">
    <property type="entry name" value="Leucine Dehydrogenase, chain A, domain 1"/>
    <property type="match status" value="1"/>
</dbReference>
<dbReference type="Gene3D" id="3.40.50.720">
    <property type="entry name" value="NAD(P)-binding Rossmann-like Domain"/>
    <property type="match status" value="1"/>
</dbReference>
<dbReference type="HAMAP" id="MF_01576">
    <property type="entry name" value="THF_DHG_CYH"/>
    <property type="match status" value="1"/>
</dbReference>
<dbReference type="InterPro" id="IPR046346">
    <property type="entry name" value="Aminoacid_DH-like_N_sf"/>
</dbReference>
<dbReference type="InterPro" id="IPR036291">
    <property type="entry name" value="NAD(P)-bd_dom_sf"/>
</dbReference>
<dbReference type="InterPro" id="IPR000672">
    <property type="entry name" value="THF_DH/CycHdrlase"/>
</dbReference>
<dbReference type="InterPro" id="IPR020630">
    <property type="entry name" value="THF_DH/CycHdrlase_cat_dom"/>
</dbReference>
<dbReference type="InterPro" id="IPR020867">
    <property type="entry name" value="THF_DH/CycHdrlase_CS"/>
</dbReference>
<dbReference type="InterPro" id="IPR020631">
    <property type="entry name" value="THF_DH/CycHdrlase_NAD-bd_dom"/>
</dbReference>
<dbReference type="NCBIfam" id="NF008058">
    <property type="entry name" value="PRK10792.1"/>
    <property type="match status" value="1"/>
</dbReference>
<dbReference type="NCBIfam" id="NF010783">
    <property type="entry name" value="PRK14186.1"/>
    <property type="match status" value="1"/>
</dbReference>
<dbReference type="PANTHER" id="PTHR48099:SF5">
    <property type="entry name" value="C-1-TETRAHYDROFOLATE SYNTHASE, CYTOPLASMIC"/>
    <property type="match status" value="1"/>
</dbReference>
<dbReference type="PANTHER" id="PTHR48099">
    <property type="entry name" value="C-1-TETRAHYDROFOLATE SYNTHASE, CYTOPLASMIC-RELATED"/>
    <property type="match status" value="1"/>
</dbReference>
<dbReference type="Pfam" id="PF00763">
    <property type="entry name" value="THF_DHG_CYH"/>
    <property type="match status" value="1"/>
</dbReference>
<dbReference type="Pfam" id="PF02882">
    <property type="entry name" value="THF_DHG_CYH_C"/>
    <property type="match status" value="1"/>
</dbReference>
<dbReference type="PRINTS" id="PR00085">
    <property type="entry name" value="THFDHDRGNASE"/>
</dbReference>
<dbReference type="SUPFAM" id="SSF53223">
    <property type="entry name" value="Aminoacid dehydrogenase-like, N-terminal domain"/>
    <property type="match status" value="1"/>
</dbReference>
<dbReference type="SUPFAM" id="SSF51735">
    <property type="entry name" value="NAD(P)-binding Rossmann-fold domains"/>
    <property type="match status" value="1"/>
</dbReference>
<dbReference type="PROSITE" id="PS00766">
    <property type="entry name" value="THF_DHG_CYH_1"/>
    <property type="match status" value="1"/>
</dbReference>
<dbReference type="PROSITE" id="PS00767">
    <property type="entry name" value="THF_DHG_CYH_2"/>
    <property type="match status" value="1"/>
</dbReference>
<evidence type="ECO:0000255" key="1">
    <source>
        <dbReference type="HAMAP-Rule" id="MF_01576"/>
    </source>
</evidence>
<accession>Q65HI8</accession>
<accession>Q62SZ2</accession>